<evidence type="ECO:0000255" key="1">
    <source>
        <dbReference type="HAMAP-Rule" id="MF_00139"/>
    </source>
</evidence>
<evidence type="ECO:0000255" key="2">
    <source>
        <dbReference type="PROSITE-ProRule" id="PRU01202"/>
    </source>
</evidence>
<proteinExistence type="inferred from homology"/>
<protein>
    <recommendedName>
        <fullName evidence="1">Bifunctional purine biosynthesis protein PurH</fullName>
    </recommendedName>
    <domain>
        <recommendedName>
            <fullName evidence="1">Phosphoribosylaminoimidazolecarboxamide formyltransferase</fullName>
            <ecNumber evidence="1">2.1.2.3</ecNumber>
        </recommendedName>
        <alternativeName>
            <fullName evidence="1">AICAR transformylase</fullName>
        </alternativeName>
    </domain>
    <domain>
        <recommendedName>
            <fullName evidence="1">IMP cyclohydrolase</fullName>
            <ecNumber evidence="1">3.5.4.10</ecNumber>
        </recommendedName>
        <alternativeName>
            <fullName evidence="1">ATIC</fullName>
        </alternativeName>
        <alternativeName>
            <fullName evidence="1">IMP synthase</fullName>
        </alternativeName>
        <alternativeName>
            <fullName evidence="1">Inosinicase</fullName>
        </alternativeName>
    </domain>
</protein>
<accession>Q1WU55</accession>
<reference key="1">
    <citation type="journal article" date="2006" name="Proc. Natl. Acad. Sci. U.S.A.">
        <title>Multireplicon genome architecture of Lactobacillus salivarius.</title>
        <authorList>
            <person name="Claesson M.J."/>
            <person name="Li Y."/>
            <person name="Leahy S."/>
            <person name="Canchaya C."/>
            <person name="van Pijkeren J.P."/>
            <person name="Cerdeno-Tarraga A.M."/>
            <person name="Parkhill J."/>
            <person name="Flynn S."/>
            <person name="O'Sullivan G.C."/>
            <person name="Collins J.K."/>
            <person name="Higgins D."/>
            <person name="Shanahan F."/>
            <person name="Fitzgerald G.F."/>
            <person name="van Sinderen D."/>
            <person name="O'Toole P.W."/>
        </authorList>
    </citation>
    <scope>NUCLEOTIDE SEQUENCE [LARGE SCALE GENOMIC DNA]</scope>
    <source>
        <strain>UCC118</strain>
    </source>
</reference>
<gene>
    <name evidence="1" type="primary">purH</name>
    <name type="ordered locus">LSL_0670</name>
</gene>
<sequence length="512" mass="57064">MKRALVSVSDKNNLVPFVKKLVEHDFEIVSTGGTKKYLDEAGIKTISVEEVTHFPEILDGRVKTLNPYIHGGLLARRELPEHMETLKEQNITPIDLVCVNLYPFKQTIENPEVTLENAIENIDIGGPSMLRSAAKNYRDVVVVVDADDYEGLEKELDENGEISLETRFKLSAKTFRHTAAYDALIADYLSKQAGEDNPEKLTLTYDLISSMRYGENSHQKAWFYEDAMPKAYSITQAKQLNGKKLSFNNIRDADAAIRAVREFDGPTVVALKHMNPCGIGQADNIELAWDRAYEADSISIFGGVIALNRKVDLATAEKMHKLFLEIIIAPEFDADALEVLSKKKNLRLLQLDFTKKDEDVRDETVSIMGGLLRQEQDVIDENPKNWEVVTENAPSDSQLETLLFAWKAVKHTKSNAIVVANDERTLGIGAGQPNRIDSTKIAIKHAGDSLNDKAVLASDAFFPMDDCVQYAAEHGIKAIVQPGGSIRDKDSIAMANKYGVAMVFTGVRHFRH</sequence>
<name>PUR9_LIGS1</name>
<comment type="catalytic activity">
    <reaction evidence="1">
        <text>(6R)-10-formyltetrahydrofolate + 5-amino-1-(5-phospho-beta-D-ribosyl)imidazole-4-carboxamide = 5-formamido-1-(5-phospho-D-ribosyl)imidazole-4-carboxamide + (6S)-5,6,7,8-tetrahydrofolate</text>
        <dbReference type="Rhea" id="RHEA:22192"/>
        <dbReference type="ChEBI" id="CHEBI:57453"/>
        <dbReference type="ChEBI" id="CHEBI:58467"/>
        <dbReference type="ChEBI" id="CHEBI:58475"/>
        <dbReference type="ChEBI" id="CHEBI:195366"/>
        <dbReference type="EC" id="2.1.2.3"/>
    </reaction>
</comment>
<comment type="catalytic activity">
    <reaction evidence="1">
        <text>IMP + H2O = 5-formamido-1-(5-phospho-D-ribosyl)imidazole-4-carboxamide</text>
        <dbReference type="Rhea" id="RHEA:18445"/>
        <dbReference type="ChEBI" id="CHEBI:15377"/>
        <dbReference type="ChEBI" id="CHEBI:58053"/>
        <dbReference type="ChEBI" id="CHEBI:58467"/>
        <dbReference type="EC" id="3.5.4.10"/>
    </reaction>
</comment>
<comment type="pathway">
    <text evidence="1">Purine metabolism; IMP biosynthesis via de novo pathway; 5-formamido-1-(5-phospho-D-ribosyl)imidazole-4-carboxamide from 5-amino-1-(5-phospho-D-ribosyl)imidazole-4-carboxamide (10-formyl THF route): step 1/1.</text>
</comment>
<comment type="pathway">
    <text evidence="1">Purine metabolism; IMP biosynthesis via de novo pathway; IMP from 5-formamido-1-(5-phospho-D-ribosyl)imidazole-4-carboxamide: step 1/1.</text>
</comment>
<comment type="domain">
    <text evidence="1">The IMP cyclohydrolase activity resides in the N-terminal region.</text>
</comment>
<comment type="similarity">
    <text evidence="1">Belongs to the PurH family.</text>
</comment>
<dbReference type="EC" id="2.1.2.3" evidence="1"/>
<dbReference type="EC" id="3.5.4.10" evidence="1"/>
<dbReference type="EMBL" id="CP000233">
    <property type="protein sequence ID" value="ABD99480.1"/>
    <property type="molecule type" value="Genomic_DNA"/>
</dbReference>
<dbReference type="RefSeq" id="WP_003700048.1">
    <property type="nucleotide sequence ID" value="NC_007929.1"/>
</dbReference>
<dbReference type="RefSeq" id="YP_535563.1">
    <property type="nucleotide sequence ID" value="NC_007929.1"/>
</dbReference>
<dbReference type="SMR" id="Q1WU55"/>
<dbReference type="STRING" id="362948.LSL_0670"/>
<dbReference type="KEGG" id="lsl:LSL_0670"/>
<dbReference type="PATRIC" id="fig|362948.14.peg.750"/>
<dbReference type="HOGENOM" id="CLU_016316_5_2_9"/>
<dbReference type="OrthoDB" id="9802065at2"/>
<dbReference type="UniPathway" id="UPA00074">
    <property type="reaction ID" value="UER00133"/>
</dbReference>
<dbReference type="UniPathway" id="UPA00074">
    <property type="reaction ID" value="UER00135"/>
</dbReference>
<dbReference type="Proteomes" id="UP000006559">
    <property type="component" value="Chromosome"/>
</dbReference>
<dbReference type="GO" id="GO:0005829">
    <property type="term" value="C:cytosol"/>
    <property type="evidence" value="ECO:0007669"/>
    <property type="project" value="TreeGrafter"/>
</dbReference>
<dbReference type="GO" id="GO:0003937">
    <property type="term" value="F:IMP cyclohydrolase activity"/>
    <property type="evidence" value="ECO:0007669"/>
    <property type="project" value="UniProtKB-UniRule"/>
</dbReference>
<dbReference type="GO" id="GO:0004643">
    <property type="term" value="F:phosphoribosylaminoimidazolecarboxamide formyltransferase activity"/>
    <property type="evidence" value="ECO:0007669"/>
    <property type="project" value="UniProtKB-UniRule"/>
</dbReference>
<dbReference type="GO" id="GO:0006189">
    <property type="term" value="P:'de novo' IMP biosynthetic process"/>
    <property type="evidence" value="ECO:0007669"/>
    <property type="project" value="UniProtKB-UniRule"/>
</dbReference>
<dbReference type="CDD" id="cd01421">
    <property type="entry name" value="IMPCH"/>
    <property type="match status" value="1"/>
</dbReference>
<dbReference type="FunFam" id="3.40.140.20:FF:000001">
    <property type="entry name" value="Bifunctional purine biosynthesis protein PurH"/>
    <property type="match status" value="1"/>
</dbReference>
<dbReference type="FunFam" id="3.40.140.20:FF:000002">
    <property type="entry name" value="Bifunctional purine biosynthesis protein PurH"/>
    <property type="match status" value="1"/>
</dbReference>
<dbReference type="FunFam" id="3.40.50.1380:FF:000001">
    <property type="entry name" value="Bifunctional purine biosynthesis protein PurH"/>
    <property type="match status" value="1"/>
</dbReference>
<dbReference type="Gene3D" id="3.40.140.20">
    <property type="match status" value="2"/>
</dbReference>
<dbReference type="Gene3D" id="3.40.50.1380">
    <property type="entry name" value="Methylglyoxal synthase-like domain"/>
    <property type="match status" value="1"/>
</dbReference>
<dbReference type="HAMAP" id="MF_00139">
    <property type="entry name" value="PurH"/>
    <property type="match status" value="1"/>
</dbReference>
<dbReference type="InterPro" id="IPR024051">
    <property type="entry name" value="AICAR_Tfase_dup_dom_sf"/>
</dbReference>
<dbReference type="InterPro" id="IPR016193">
    <property type="entry name" value="Cytidine_deaminase-like"/>
</dbReference>
<dbReference type="InterPro" id="IPR011607">
    <property type="entry name" value="MGS-like_dom"/>
</dbReference>
<dbReference type="InterPro" id="IPR036914">
    <property type="entry name" value="MGS-like_dom_sf"/>
</dbReference>
<dbReference type="InterPro" id="IPR002695">
    <property type="entry name" value="PurH-like"/>
</dbReference>
<dbReference type="NCBIfam" id="NF002049">
    <property type="entry name" value="PRK00881.1"/>
    <property type="match status" value="1"/>
</dbReference>
<dbReference type="NCBIfam" id="TIGR00355">
    <property type="entry name" value="purH"/>
    <property type="match status" value="1"/>
</dbReference>
<dbReference type="PANTHER" id="PTHR11692:SF0">
    <property type="entry name" value="BIFUNCTIONAL PURINE BIOSYNTHESIS PROTEIN ATIC"/>
    <property type="match status" value="1"/>
</dbReference>
<dbReference type="PANTHER" id="PTHR11692">
    <property type="entry name" value="BIFUNCTIONAL PURINE BIOSYNTHESIS PROTEIN PURH"/>
    <property type="match status" value="1"/>
</dbReference>
<dbReference type="Pfam" id="PF01808">
    <property type="entry name" value="AICARFT_IMPCHas"/>
    <property type="match status" value="1"/>
</dbReference>
<dbReference type="Pfam" id="PF02142">
    <property type="entry name" value="MGS"/>
    <property type="match status" value="1"/>
</dbReference>
<dbReference type="PIRSF" id="PIRSF000414">
    <property type="entry name" value="AICARFT_IMPCHas"/>
    <property type="match status" value="1"/>
</dbReference>
<dbReference type="SMART" id="SM00798">
    <property type="entry name" value="AICARFT_IMPCHas"/>
    <property type="match status" value="1"/>
</dbReference>
<dbReference type="SMART" id="SM00851">
    <property type="entry name" value="MGS"/>
    <property type="match status" value="1"/>
</dbReference>
<dbReference type="SUPFAM" id="SSF53927">
    <property type="entry name" value="Cytidine deaminase-like"/>
    <property type="match status" value="1"/>
</dbReference>
<dbReference type="SUPFAM" id="SSF52335">
    <property type="entry name" value="Methylglyoxal synthase-like"/>
    <property type="match status" value="1"/>
</dbReference>
<dbReference type="PROSITE" id="PS51855">
    <property type="entry name" value="MGS"/>
    <property type="match status" value="1"/>
</dbReference>
<keyword id="KW-0378">Hydrolase</keyword>
<keyword id="KW-0511">Multifunctional enzyme</keyword>
<keyword id="KW-0658">Purine biosynthesis</keyword>
<keyword id="KW-1185">Reference proteome</keyword>
<keyword id="KW-0808">Transferase</keyword>
<organism>
    <name type="scientific">Ligilactobacillus salivarius (strain UCC118)</name>
    <name type="common">Lactobacillus salivarius</name>
    <dbReference type="NCBI Taxonomy" id="362948"/>
    <lineage>
        <taxon>Bacteria</taxon>
        <taxon>Bacillati</taxon>
        <taxon>Bacillota</taxon>
        <taxon>Bacilli</taxon>
        <taxon>Lactobacillales</taxon>
        <taxon>Lactobacillaceae</taxon>
        <taxon>Ligilactobacillus</taxon>
    </lineage>
</organism>
<feature type="chain" id="PRO_1000018902" description="Bifunctional purine biosynthesis protein PurH">
    <location>
        <begin position="1"/>
        <end position="512"/>
    </location>
</feature>
<feature type="domain" description="MGS-like" evidence="2">
    <location>
        <begin position="1"/>
        <end position="144"/>
    </location>
</feature>